<keyword id="KW-0378">Hydrolase</keyword>
<keyword id="KW-0441">Lipid A biosynthesis</keyword>
<keyword id="KW-0444">Lipid biosynthesis</keyword>
<keyword id="KW-0443">Lipid metabolism</keyword>
<keyword id="KW-0479">Metal-binding</keyword>
<keyword id="KW-1185">Reference proteome</keyword>
<keyword id="KW-0862">Zinc</keyword>
<protein>
    <recommendedName>
        <fullName evidence="1">UDP-3-O-acyl-N-acetylglucosamine deacetylase</fullName>
        <shortName evidence="1">UDP-3-O-acyl-GlcNAc deacetylase</shortName>
        <ecNumber evidence="1">3.5.1.108</ecNumber>
    </recommendedName>
    <alternativeName>
        <fullName evidence="1">UDP-3-O-[R-3-hydroxymyristoyl]-N-acetylglucosamine deacetylase</fullName>
    </alternativeName>
</protein>
<name>LPXC_CAMJE</name>
<proteinExistence type="inferred from homology"/>
<comment type="function">
    <text evidence="1">Catalyzes the hydrolysis of UDP-3-O-myristoyl-N-acetylglucosamine to form UDP-3-O-myristoylglucosamine and acetate, the committed step in lipid A biosynthesis.</text>
</comment>
<comment type="catalytic activity">
    <reaction evidence="1">
        <text>a UDP-3-O-[(3R)-3-hydroxyacyl]-N-acetyl-alpha-D-glucosamine + H2O = a UDP-3-O-[(3R)-3-hydroxyacyl]-alpha-D-glucosamine + acetate</text>
        <dbReference type="Rhea" id="RHEA:67816"/>
        <dbReference type="ChEBI" id="CHEBI:15377"/>
        <dbReference type="ChEBI" id="CHEBI:30089"/>
        <dbReference type="ChEBI" id="CHEBI:137740"/>
        <dbReference type="ChEBI" id="CHEBI:173225"/>
        <dbReference type="EC" id="3.5.1.108"/>
    </reaction>
</comment>
<comment type="cofactor">
    <cofactor evidence="1">
        <name>Zn(2+)</name>
        <dbReference type="ChEBI" id="CHEBI:29105"/>
    </cofactor>
</comment>
<comment type="pathway">
    <text evidence="1">Glycolipid biosynthesis; lipid IV(A) biosynthesis; lipid IV(A) from (3R)-3-hydroxytetradecanoyl-[acyl-carrier-protein] and UDP-N-acetyl-alpha-D-glucosamine: step 2/6.</text>
</comment>
<comment type="similarity">
    <text evidence="1">Belongs to the LpxC family.</text>
</comment>
<accession>Q9PIZ5</accession>
<accession>Q0PC05</accession>
<reference key="1">
    <citation type="journal article" date="2000" name="Nature">
        <title>The genome sequence of the food-borne pathogen Campylobacter jejuni reveals hypervariable sequences.</title>
        <authorList>
            <person name="Parkhill J."/>
            <person name="Wren B.W."/>
            <person name="Mungall K.L."/>
            <person name="Ketley J.M."/>
            <person name="Churcher C.M."/>
            <person name="Basham D."/>
            <person name="Chillingworth T."/>
            <person name="Davies R.M."/>
            <person name="Feltwell T."/>
            <person name="Holroyd S."/>
            <person name="Jagels K."/>
            <person name="Karlyshev A.V."/>
            <person name="Moule S."/>
            <person name="Pallen M.J."/>
            <person name="Penn C.W."/>
            <person name="Quail M.A."/>
            <person name="Rajandream M.A."/>
            <person name="Rutherford K.M."/>
            <person name="van Vliet A.H.M."/>
            <person name="Whitehead S."/>
            <person name="Barrell B.G."/>
        </authorList>
    </citation>
    <scope>NUCLEOTIDE SEQUENCE [LARGE SCALE GENOMIC DNA]</scope>
    <source>
        <strain>ATCC 700819 / NCTC 11168</strain>
    </source>
</reference>
<sequence>MKQLTLAKTVKGVGIGLHKGEPIEITLEPLEANSGIVFFRSDLNASYKASPENVINTQMATVLGDDRGFISTIEHLMSAINAYGIDNVRIVLNANEAPVMDGSSISFCMMLDEAGVKELDAPKKIMVIKKPIEVRDGNKFVRLTPTKEPRINYTIKFDNAVIGEQSYNFEFSKKNYIENIARARTFGFLKDVQALRSMNLALGGSLENTIVVDENRILNPEGLRFKDEFVRHKILDAIGDLTLLGYRVFGDYTSYAGSHHLNHLLTKEVLKDKDAYEIVSLEKTTQKAYEKVFA</sequence>
<organism>
    <name type="scientific">Campylobacter jejuni subsp. jejuni serotype O:2 (strain ATCC 700819 / NCTC 11168)</name>
    <dbReference type="NCBI Taxonomy" id="192222"/>
    <lineage>
        <taxon>Bacteria</taxon>
        <taxon>Pseudomonadati</taxon>
        <taxon>Campylobacterota</taxon>
        <taxon>Epsilonproteobacteria</taxon>
        <taxon>Campylobacterales</taxon>
        <taxon>Campylobacteraceae</taxon>
        <taxon>Campylobacter</taxon>
    </lineage>
</organism>
<dbReference type="EC" id="3.5.1.108" evidence="1"/>
<dbReference type="EMBL" id="AL111168">
    <property type="protein sequence ID" value="CAL34303.1"/>
    <property type="molecule type" value="Genomic_DNA"/>
</dbReference>
<dbReference type="PIR" id="D81430">
    <property type="entry name" value="D81430"/>
</dbReference>
<dbReference type="RefSeq" id="WP_002859351.1">
    <property type="nucleotide sequence ID" value="NZ_SZUC01000005.1"/>
</dbReference>
<dbReference type="RefSeq" id="YP_002343592.1">
    <property type="nucleotide sequence ID" value="NC_002163.1"/>
</dbReference>
<dbReference type="SMR" id="Q9PIZ5"/>
<dbReference type="STRING" id="192222.Cj0132"/>
<dbReference type="PaxDb" id="192222-Cj0132"/>
<dbReference type="EnsemblBacteria" id="CAL34303">
    <property type="protein sequence ID" value="CAL34303"/>
    <property type="gene ID" value="Cj0132"/>
</dbReference>
<dbReference type="GeneID" id="904467"/>
<dbReference type="KEGG" id="cje:Cj0132"/>
<dbReference type="PATRIC" id="fig|192222.6.peg.130"/>
<dbReference type="eggNOG" id="COG0774">
    <property type="taxonomic scope" value="Bacteria"/>
</dbReference>
<dbReference type="HOGENOM" id="CLU_046528_1_0_7"/>
<dbReference type="OrthoDB" id="9802746at2"/>
<dbReference type="UniPathway" id="UPA00359">
    <property type="reaction ID" value="UER00478"/>
</dbReference>
<dbReference type="Proteomes" id="UP000000799">
    <property type="component" value="Chromosome"/>
</dbReference>
<dbReference type="GO" id="GO:0016020">
    <property type="term" value="C:membrane"/>
    <property type="evidence" value="ECO:0007669"/>
    <property type="project" value="GOC"/>
</dbReference>
<dbReference type="GO" id="GO:0046872">
    <property type="term" value="F:metal ion binding"/>
    <property type="evidence" value="ECO:0007669"/>
    <property type="project" value="UniProtKB-KW"/>
</dbReference>
<dbReference type="GO" id="GO:0103117">
    <property type="term" value="F:UDP-3-O-acyl-N-acetylglucosamine deacetylase activity"/>
    <property type="evidence" value="ECO:0007669"/>
    <property type="project" value="UniProtKB-UniRule"/>
</dbReference>
<dbReference type="GO" id="GO:0009245">
    <property type="term" value="P:lipid A biosynthetic process"/>
    <property type="evidence" value="ECO:0007669"/>
    <property type="project" value="UniProtKB-UniRule"/>
</dbReference>
<dbReference type="Gene3D" id="3.30.230.20">
    <property type="entry name" value="lpxc deacetylase, domain 1"/>
    <property type="match status" value="1"/>
</dbReference>
<dbReference type="Gene3D" id="3.30.1700.10">
    <property type="entry name" value="lpxc deacetylase, domain 2"/>
    <property type="match status" value="1"/>
</dbReference>
<dbReference type="HAMAP" id="MF_00388">
    <property type="entry name" value="LpxC"/>
    <property type="match status" value="1"/>
</dbReference>
<dbReference type="InterPro" id="IPR020568">
    <property type="entry name" value="Ribosomal_Su5_D2-typ_SF"/>
</dbReference>
<dbReference type="InterPro" id="IPR004463">
    <property type="entry name" value="UDP-acyl_GlcNac_deAcase"/>
</dbReference>
<dbReference type="InterPro" id="IPR011334">
    <property type="entry name" value="UDP-acyl_GlcNac_deAcase_C"/>
</dbReference>
<dbReference type="InterPro" id="IPR015870">
    <property type="entry name" value="UDP-acyl_N-AcGlcN_deAcase_N"/>
</dbReference>
<dbReference type="NCBIfam" id="TIGR00325">
    <property type="entry name" value="lpxC"/>
    <property type="match status" value="1"/>
</dbReference>
<dbReference type="PANTHER" id="PTHR33694">
    <property type="entry name" value="UDP-3-O-ACYL-N-ACETYLGLUCOSAMINE DEACETYLASE 1, MITOCHONDRIAL-RELATED"/>
    <property type="match status" value="1"/>
</dbReference>
<dbReference type="PANTHER" id="PTHR33694:SF1">
    <property type="entry name" value="UDP-3-O-ACYL-N-ACETYLGLUCOSAMINE DEACETYLASE 1, MITOCHONDRIAL-RELATED"/>
    <property type="match status" value="1"/>
</dbReference>
<dbReference type="Pfam" id="PF03331">
    <property type="entry name" value="LpxC"/>
    <property type="match status" value="1"/>
</dbReference>
<dbReference type="SUPFAM" id="SSF54211">
    <property type="entry name" value="Ribosomal protein S5 domain 2-like"/>
    <property type="match status" value="2"/>
</dbReference>
<evidence type="ECO:0000255" key="1">
    <source>
        <dbReference type="HAMAP-Rule" id="MF_00388"/>
    </source>
</evidence>
<gene>
    <name evidence="1" type="primary">lpxC</name>
    <name type="ordered locus">Cj0132</name>
</gene>
<feature type="chain" id="PRO_0000191921" description="UDP-3-O-acyl-N-acetylglucosamine deacetylase">
    <location>
        <begin position="1"/>
        <end position="294"/>
    </location>
</feature>
<feature type="active site" description="Proton donor" evidence="1">
    <location>
        <position position="259"/>
    </location>
</feature>
<feature type="binding site" evidence="1">
    <location>
        <position position="75"/>
    </location>
    <ligand>
        <name>Zn(2+)</name>
        <dbReference type="ChEBI" id="CHEBI:29105"/>
    </ligand>
</feature>
<feature type="binding site" evidence="1">
    <location>
        <position position="232"/>
    </location>
    <ligand>
        <name>Zn(2+)</name>
        <dbReference type="ChEBI" id="CHEBI:29105"/>
    </ligand>
</feature>
<feature type="binding site" evidence="1">
    <location>
        <position position="236"/>
    </location>
    <ligand>
        <name>Zn(2+)</name>
        <dbReference type="ChEBI" id="CHEBI:29105"/>
    </ligand>
</feature>